<organism>
    <name type="scientific">Haemophilus influenzae (strain PittEE)</name>
    <dbReference type="NCBI Taxonomy" id="374930"/>
    <lineage>
        <taxon>Bacteria</taxon>
        <taxon>Pseudomonadati</taxon>
        <taxon>Pseudomonadota</taxon>
        <taxon>Gammaproteobacteria</taxon>
        <taxon>Pasteurellales</taxon>
        <taxon>Pasteurellaceae</taxon>
        <taxon>Haemophilus</taxon>
    </lineage>
</organism>
<reference key="1">
    <citation type="journal article" date="2007" name="Genome Biol.">
        <title>Characterization and modeling of the Haemophilus influenzae core and supragenomes based on the complete genomic sequences of Rd and 12 clinical nontypeable strains.</title>
        <authorList>
            <person name="Hogg J.S."/>
            <person name="Hu F.Z."/>
            <person name="Janto B."/>
            <person name="Boissy R."/>
            <person name="Hayes J."/>
            <person name="Keefe R."/>
            <person name="Post J.C."/>
            <person name="Ehrlich G.D."/>
        </authorList>
    </citation>
    <scope>NUCLEOTIDE SEQUENCE [LARGE SCALE GENOMIC DNA]</scope>
    <source>
        <strain>PittEE</strain>
    </source>
</reference>
<protein>
    <recommendedName>
        <fullName evidence="1">Valine--tRNA ligase</fullName>
        <ecNumber evidence="1">6.1.1.9</ecNumber>
    </recommendedName>
    <alternativeName>
        <fullName evidence="1">Valyl-tRNA synthetase</fullName>
        <shortName evidence="1">ValRS</shortName>
    </alternativeName>
</protein>
<gene>
    <name evidence="1" type="primary">valS</name>
    <name type="ordered locus">CGSHiEE_04525</name>
</gene>
<comment type="function">
    <text evidence="1">Catalyzes the attachment of valine to tRNA(Val). As ValRS can inadvertently accommodate and process structurally similar amino acids such as threonine, to avoid such errors, it has a 'posttransfer' editing activity that hydrolyzes mischarged Thr-tRNA(Val) in a tRNA-dependent manner.</text>
</comment>
<comment type="catalytic activity">
    <reaction evidence="1">
        <text>tRNA(Val) + L-valine + ATP = L-valyl-tRNA(Val) + AMP + diphosphate</text>
        <dbReference type="Rhea" id="RHEA:10704"/>
        <dbReference type="Rhea" id="RHEA-COMP:9672"/>
        <dbReference type="Rhea" id="RHEA-COMP:9708"/>
        <dbReference type="ChEBI" id="CHEBI:30616"/>
        <dbReference type="ChEBI" id="CHEBI:33019"/>
        <dbReference type="ChEBI" id="CHEBI:57762"/>
        <dbReference type="ChEBI" id="CHEBI:78442"/>
        <dbReference type="ChEBI" id="CHEBI:78537"/>
        <dbReference type="ChEBI" id="CHEBI:456215"/>
        <dbReference type="EC" id="6.1.1.9"/>
    </reaction>
</comment>
<comment type="subunit">
    <text evidence="1">Monomer.</text>
</comment>
<comment type="subcellular location">
    <subcellularLocation>
        <location evidence="1">Cytoplasm</location>
    </subcellularLocation>
</comment>
<comment type="domain">
    <text evidence="1">ValRS has two distinct active sites: one for aminoacylation and one for editing. The misactivated threonine is translocated from the active site to the editing site.</text>
</comment>
<comment type="domain">
    <text evidence="1">The C-terminal coiled-coil domain is crucial for aminoacylation activity.</text>
</comment>
<comment type="similarity">
    <text evidence="1">Belongs to the class-I aminoacyl-tRNA synthetase family. ValS type 1 subfamily.</text>
</comment>
<dbReference type="EC" id="6.1.1.9" evidence="1"/>
<dbReference type="EMBL" id="CP000671">
    <property type="protein sequence ID" value="ABQ98300.1"/>
    <property type="molecule type" value="Genomic_DNA"/>
</dbReference>
<dbReference type="SMR" id="A5UBZ9"/>
<dbReference type="KEGG" id="hip:CGSHiEE_04525"/>
<dbReference type="HOGENOM" id="CLU_001493_0_2_6"/>
<dbReference type="GO" id="GO:0005829">
    <property type="term" value="C:cytosol"/>
    <property type="evidence" value="ECO:0007669"/>
    <property type="project" value="TreeGrafter"/>
</dbReference>
<dbReference type="GO" id="GO:0002161">
    <property type="term" value="F:aminoacyl-tRNA deacylase activity"/>
    <property type="evidence" value="ECO:0007669"/>
    <property type="project" value="InterPro"/>
</dbReference>
<dbReference type="GO" id="GO:0005524">
    <property type="term" value="F:ATP binding"/>
    <property type="evidence" value="ECO:0007669"/>
    <property type="project" value="UniProtKB-UniRule"/>
</dbReference>
<dbReference type="GO" id="GO:0004832">
    <property type="term" value="F:valine-tRNA ligase activity"/>
    <property type="evidence" value="ECO:0007669"/>
    <property type="project" value="UniProtKB-UniRule"/>
</dbReference>
<dbReference type="GO" id="GO:0006438">
    <property type="term" value="P:valyl-tRNA aminoacylation"/>
    <property type="evidence" value="ECO:0007669"/>
    <property type="project" value="UniProtKB-UniRule"/>
</dbReference>
<dbReference type="CDD" id="cd07962">
    <property type="entry name" value="Anticodon_Ia_Val"/>
    <property type="match status" value="1"/>
</dbReference>
<dbReference type="CDD" id="cd00817">
    <property type="entry name" value="ValRS_core"/>
    <property type="match status" value="1"/>
</dbReference>
<dbReference type="FunFam" id="1.10.287.380:FF:000001">
    <property type="entry name" value="Valine--tRNA ligase"/>
    <property type="match status" value="1"/>
</dbReference>
<dbReference type="FunFam" id="1.10.730.10:FF:000007">
    <property type="entry name" value="Valine--tRNA ligase"/>
    <property type="match status" value="1"/>
</dbReference>
<dbReference type="FunFam" id="3.40.50.620:FF:000032">
    <property type="entry name" value="Valine--tRNA ligase"/>
    <property type="match status" value="1"/>
</dbReference>
<dbReference type="FunFam" id="3.40.50.620:FF:000146">
    <property type="entry name" value="Valine--tRNA ligase"/>
    <property type="match status" value="1"/>
</dbReference>
<dbReference type="FunFam" id="3.90.740.10:FF:000003">
    <property type="entry name" value="Valine--tRNA ligase"/>
    <property type="match status" value="1"/>
</dbReference>
<dbReference type="FunFam" id="3.90.740.10:FF:000004">
    <property type="entry name" value="Valine--tRNA ligase"/>
    <property type="match status" value="1"/>
</dbReference>
<dbReference type="Gene3D" id="3.40.50.620">
    <property type="entry name" value="HUPs"/>
    <property type="match status" value="2"/>
</dbReference>
<dbReference type="Gene3D" id="1.10.730.10">
    <property type="entry name" value="Isoleucyl-tRNA Synthetase, Domain 1"/>
    <property type="match status" value="1"/>
</dbReference>
<dbReference type="Gene3D" id="1.10.287.380">
    <property type="entry name" value="Valyl-tRNA synthetase, C-terminal domain"/>
    <property type="match status" value="1"/>
</dbReference>
<dbReference type="Gene3D" id="3.90.740.10">
    <property type="entry name" value="Valyl/Leucyl/Isoleucyl-tRNA synthetase, editing domain"/>
    <property type="match status" value="2"/>
</dbReference>
<dbReference type="HAMAP" id="MF_02004">
    <property type="entry name" value="Val_tRNA_synth_type1"/>
    <property type="match status" value="1"/>
</dbReference>
<dbReference type="InterPro" id="IPR001412">
    <property type="entry name" value="aa-tRNA-synth_I_CS"/>
</dbReference>
<dbReference type="InterPro" id="IPR002300">
    <property type="entry name" value="aa-tRNA-synth_Ia"/>
</dbReference>
<dbReference type="InterPro" id="IPR033705">
    <property type="entry name" value="Anticodon_Ia_Val"/>
</dbReference>
<dbReference type="InterPro" id="IPR013155">
    <property type="entry name" value="M/V/L/I-tRNA-synth_anticd-bd"/>
</dbReference>
<dbReference type="InterPro" id="IPR014729">
    <property type="entry name" value="Rossmann-like_a/b/a_fold"/>
</dbReference>
<dbReference type="InterPro" id="IPR010978">
    <property type="entry name" value="tRNA-bd_arm"/>
</dbReference>
<dbReference type="InterPro" id="IPR009080">
    <property type="entry name" value="tRNAsynth_Ia_anticodon-bd"/>
</dbReference>
<dbReference type="InterPro" id="IPR037118">
    <property type="entry name" value="Val-tRNA_synth_C_sf"/>
</dbReference>
<dbReference type="InterPro" id="IPR019499">
    <property type="entry name" value="Val-tRNA_synth_tRNA-bd"/>
</dbReference>
<dbReference type="InterPro" id="IPR009008">
    <property type="entry name" value="Val/Leu/Ile-tRNA-synth_edit"/>
</dbReference>
<dbReference type="InterPro" id="IPR002303">
    <property type="entry name" value="Valyl-tRNA_ligase"/>
</dbReference>
<dbReference type="NCBIfam" id="NF004349">
    <property type="entry name" value="PRK05729.1"/>
    <property type="match status" value="1"/>
</dbReference>
<dbReference type="NCBIfam" id="TIGR00422">
    <property type="entry name" value="valS"/>
    <property type="match status" value="1"/>
</dbReference>
<dbReference type="PANTHER" id="PTHR11946:SF93">
    <property type="entry name" value="VALINE--TRNA LIGASE, CHLOROPLASTIC_MITOCHONDRIAL 2"/>
    <property type="match status" value="1"/>
</dbReference>
<dbReference type="PANTHER" id="PTHR11946">
    <property type="entry name" value="VALYL-TRNA SYNTHETASES"/>
    <property type="match status" value="1"/>
</dbReference>
<dbReference type="Pfam" id="PF08264">
    <property type="entry name" value="Anticodon_1"/>
    <property type="match status" value="1"/>
</dbReference>
<dbReference type="Pfam" id="PF00133">
    <property type="entry name" value="tRNA-synt_1"/>
    <property type="match status" value="1"/>
</dbReference>
<dbReference type="Pfam" id="PF10458">
    <property type="entry name" value="Val_tRNA-synt_C"/>
    <property type="match status" value="1"/>
</dbReference>
<dbReference type="PRINTS" id="PR00986">
    <property type="entry name" value="TRNASYNTHVAL"/>
</dbReference>
<dbReference type="SUPFAM" id="SSF47323">
    <property type="entry name" value="Anticodon-binding domain of a subclass of class I aminoacyl-tRNA synthetases"/>
    <property type="match status" value="1"/>
</dbReference>
<dbReference type="SUPFAM" id="SSF52374">
    <property type="entry name" value="Nucleotidylyl transferase"/>
    <property type="match status" value="1"/>
</dbReference>
<dbReference type="SUPFAM" id="SSF46589">
    <property type="entry name" value="tRNA-binding arm"/>
    <property type="match status" value="1"/>
</dbReference>
<dbReference type="SUPFAM" id="SSF50677">
    <property type="entry name" value="ValRS/IleRS/LeuRS editing domain"/>
    <property type="match status" value="1"/>
</dbReference>
<dbReference type="PROSITE" id="PS00178">
    <property type="entry name" value="AA_TRNA_LIGASE_I"/>
    <property type="match status" value="1"/>
</dbReference>
<feature type="chain" id="PRO_1000073715" description="Valine--tRNA ligase">
    <location>
        <begin position="1"/>
        <end position="954"/>
    </location>
</feature>
<feature type="coiled-coil region" evidence="1">
    <location>
        <begin position="883"/>
        <end position="953"/>
    </location>
</feature>
<feature type="short sequence motif" description="'HIGH' region">
    <location>
        <begin position="48"/>
        <end position="58"/>
    </location>
</feature>
<feature type="short sequence motif" description="'KMSKS' region">
    <location>
        <begin position="560"/>
        <end position="564"/>
    </location>
</feature>
<feature type="binding site" evidence="1">
    <location>
        <position position="563"/>
    </location>
    <ligand>
        <name>ATP</name>
        <dbReference type="ChEBI" id="CHEBI:30616"/>
    </ligand>
</feature>
<keyword id="KW-0030">Aminoacyl-tRNA synthetase</keyword>
<keyword id="KW-0067">ATP-binding</keyword>
<keyword id="KW-0175">Coiled coil</keyword>
<keyword id="KW-0963">Cytoplasm</keyword>
<keyword id="KW-0436">Ligase</keyword>
<keyword id="KW-0547">Nucleotide-binding</keyword>
<keyword id="KW-0648">Protein biosynthesis</keyword>
<evidence type="ECO:0000255" key="1">
    <source>
        <dbReference type="HAMAP-Rule" id="MF_02004"/>
    </source>
</evidence>
<proteinExistence type="inferred from homology"/>
<name>SYV_HAEIE</name>
<accession>A5UBZ9</accession>
<sequence>MTQKFEMADRFNPSAVEQALYQHWEESGYFKPSGNENAPSYCIAIPPPNVTGSLHMGHAFQQTLMDTLIRFNRMEGHNTLWQAGTDHAGIATQMVVERKIGAEEGKTRHDYGREAFINKIWDWKAYSGGTISQQMRRLGNSIDWERERFTMDDGLSNAVKEVFVRLHEEGLIYRGKRLVNWDPKLHTAISDLEVENKESKGSLWHFRYPLANGAKTADGKDYLVVATTRPETMLGDTAVAVHPEDERYQSLIGKTVVLPLANREIPIIADEYVDREFGTGVVKITPAHDFNDYEVGKRHGLPMVNVLTLNADIRDEAEIIGTDGKPLAGYEATIPADYRGLERFAARKKIVADFESLGLLDEIKPHDLKVPYGDRGGVPIEPMLTDQWYVSVKPLADVAIKAVEDCEIQFVPKQYENLYFSWMRDIQDWCISRQLWWGHRIPAWYDTEGNVYVARNETEVRSKYNLDFAVELKQDEDVLDTWFSSGLWTFSTLGWPEQTKELKMFHPTDVLITGFDIIFFWVARMIMFTMHFVKDENGKPQVPFKTVYVTGLIRDEQGQKMSKSKGNVLDPIDMIDGISLDDLLEKRTGNMMQPQLAEKIAKATRKEFADGIAAHGTDALRFTLAALASNGRDINWDMKRLEGYRNFCNKLWNASRFVLTNDKLDLSEGEIEFSLADRWIQSEFNRTVETFRNSLSQYRFDLCANAIYEFTWNQFCDWYLELTKPVFANGNAAQIRAASQTLVHVLEKLLRLAHPLIPFITEEIWQKVKGFVGITADSIMLQPFPQVEESGFDLEAEAEIEWLKEVIVAVRNIRAESNIAPSKGLDLLFRNLSTENAKILEKQTALLKAMAKLDNVQVLAANETAPLAVAKLVGNAELLVPMAGFINKEAELARLTKEIEKYQNEVKRIENKLSNEAFVAKAPEAVIAKEREKQAEYQSGLEKIQEQYKAIEAL</sequence>